<gene>
    <name evidence="1" type="primary">rpmB</name>
    <name type="ordered locus">Pnuc_1734</name>
</gene>
<proteinExistence type="inferred from homology"/>
<sequence length="77" mass="8803">MAKVCQVTGKKPMVGNNVSHANNKTKRRFLPNLQNRRFWVESENRWISLRLTNAGLRVIDKNGIDAVLSDLRARGEI</sequence>
<reference key="1">
    <citation type="journal article" date="2012" name="Stand. Genomic Sci.">
        <title>Complete genome sequence of Polynucleobacter necessarius subsp. asymbioticus type strain (QLW-P1DMWA-1(T)).</title>
        <authorList>
            <person name="Meincke L."/>
            <person name="Copeland A."/>
            <person name="Lapidus A."/>
            <person name="Lucas S."/>
            <person name="Berry K.W."/>
            <person name="Del Rio T.G."/>
            <person name="Hammon N."/>
            <person name="Dalin E."/>
            <person name="Tice H."/>
            <person name="Pitluck S."/>
            <person name="Richardson P."/>
            <person name="Bruce D."/>
            <person name="Goodwin L."/>
            <person name="Han C."/>
            <person name="Tapia R."/>
            <person name="Detter J.C."/>
            <person name="Schmutz J."/>
            <person name="Brettin T."/>
            <person name="Larimer F."/>
            <person name="Land M."/>
            <person name="Hauser L."/>
            <person name="Kyrpides N.C."/>
            <person name="Ivanova N."/>
            <person name="Goker M."/>
            <person name="Woyke T."/>
            <person name="Wu Q.L."/>
            <person name="Pockl M."/>
            <person name="Hahn M.W."/>
            <person name="Klenk H.P."/>
        </authorList>
    </citation>
    <scope>NUCLEOTIDE SEQUENCE [LARGE SCALE GENOMIC DNA]</scope>
    <source>
        <strain>DSM 18221 / CIP 109841 / QLW-P1DMWA-1</strain>
    </source>
</reference>
<evidence type="ECO:0000255" key="1">
    <source>
        <dbReference type="HAMAP-Rule" id="MF_00373"/>
    </source>
</evidence>
<evidence type="ECO:0000305" key="2"/>
<name>RL28_POLAQ</name>
<organism>
    <name type="scientific">Polynucleobacter asymbioticus (strain DSM 18221 / CIP 109841 / QLW-P1DMWA-1)</name>
    <name type="common">Polynucleobacter necessarius subsp. asymbioticus</name>
    <dbReference type="NCBI Taxonomy" id="312153"/>
    <lineage>
        <taxon>Bacteria</taxon>
        <taxon>Pseudomonadati</taxon>
        <taxon>Pseudomonadota</taxon>
        <taxon>Betaproteobacteria</taxon>
        <taxon>Burkholderiales</taxon>
        <taxon>Burkholderiaceae</taxon>
        <taxon>Polynucleobacter</taxon>
    </lineage>
</organism>
<protein>
    <recommendedName>
        <fullName evidence="1">Large ribosomal subunit protein bL28</fullName>
    </recommendedName>
    <alternativeName>
        <fullName evidence="2">50S ribosomal protein L28</fullName>
    </alternativeName>
</protein>
<dbReference type="EMBL" id="CP000655">
    <property type="protein sequence ID" value="ABP34947.1"/>
    <property type="molecule type" value="Genomic_DNA"/>
</dbReference>
<dbReference type="RefSeq" id="WP_011903570.1">
    <property type="nucleotide sequence ID" value="NC_009379.1"/>
</dbReference>
<dbReference type="SMR" id="A4SZN3"/>
<dbReference type="GeneID" id="31482123"/>
<dbReference type="KEGG" id="pnu:Pnuc_1734"/>
<dbReference type="eggNOG" id="COG0227">
    <property type="taxonomic scope" value="Bacteria"/>
</dbReference>
<dbReference type="HOGENOM" id="CLU_064548_3_1_4"/>
<dbReference type="Proteomes" id="UP000000231">
    <property type="component" value="Chromosome"/>
</dbReference>
<dbReference type="GO" id="GO:0022625">
    <property type="term" value="C:cytosolic large ribosomal subunit"/>
    <property type="evidence" value="ECO:0007669"/>
    <property type="project" value="TreeGrafter"/>
</dbReference>
<dbReference type="GO" id="GO:0003735">
    <property type="term" value="F:structural constituent of ribosome"/>
    <property type="evidence" value="ECO:0007669"/>
    <property type="project" value="InterPro"/>
</dbReference>
<dbReference type="GO" id="GO:0006412">
    <property type="term" value="P:translation"/>
    <property type="evidence" value="ECO:0007669"/>
    <property type="project" value="UniProtKB-UniRule"/>
</dbReference>
<dbReference type="FunFam" id="2.30.170.40:FF:000001">
    <property type="entry name" value="50S ribosomal protein L28"/>
    <property type="match status" value="1"/>
</dbReference>
<dbReference type="Gene3D" id="2.30.170.40">
    <property type="entry name" value="Ribosomal protein L28/L24"/>
    <property type="match status" value="1"/>
</dbReference>
<dbReference type="HAMAP" id="MF_00373">
    <property type="entry name" value="Ribosomal_bL28"/>
    <property type="match status" value="1"/>
</dbReference>
<dbReference type="InterPro" id="IPR026569">
    <property type="entry name" value="Ribosomal_bL28"/>
</dbReference>
<dbReference type="InterPro" id="IPR034704">
    <property type="entry name" value="Ribosomal_bL28/bL31-like_sf"/>
</dbReference>
<dbReference type="InterPro" id="IPR001383">
    <property type="entry name" value="Ribosomal_bL28_bact-type"/>
</dbReference>
<dbReference type="InterPro" id="IPR037147">
    <property type="entry name" value="Ribosomal_bL28_sf"/>
</dbReference>
<dbReference type="NCBIfam" id="TIGR00009">
    <property type="entry name" value="L28"/>
    <property type="match status" value="1"/>
</dbReference>
<dbReference type="PANTHER" id="PTHR13528">
    <property type="entry name" value="39S RIBOSOMAL PROTEIN L28, MITOCHONDRIAL"/>
    <property type="match status" value="1"/>
</dbReference>
<dbReference type="PANTHER" id="PTHR13528:SF2">
    <property type="entry name" value="LARGE RIBOSOMAL SUBUNIT PROTEIN BL28M"/>
    <property type="match status" value="1"/>
</dbReference>
<dbReference type="Pfam" id="PF00830">
    <property type="entry name" value="Ribosomal_L28"/>
    <property type="match status" value="1"/>
</dbReference>
<dbReference type="SUPFAM" id="SSF143800">
    <property type="entry name" value="L28p-like"/>
    <property type="match status" value="1"/>
</dbReference>
<feature type="chain" id="PRO_1000079858" description="Large ribosomal subunit protein bL28">
    <location>
        <begin position="1"/>
        <end position="77"/>
    </location>
</feature>
<keyword id="KW-1185">Reference proteome</keyword>
<keyword id="KW-0687">Ribonucleoprotein</keyword>
<keyword id="KW-0689">Ribosomal protein</keyword>
<comment type="similarity">
    <text evidence="1">Belongs to the bacterial ribosomal protein bL28 family.</text>
</comment>
<accession>A4SZN3</accession>